<name>RLMC_ESCF3</name>
<organism>
    <name type="scientific">Escherichia fergusonii (strain ATCC 35469 / DSM 13698 / CCUG 18766 / IAM 14443 / JCM 21226 / LMG 7866 / NBRC 102419 / NCTC 12128 / CDC 0568-73)</name>
    <dbReference type="NCBI Taxonomy" id="585054"/>
    <lineage>
        <taxon>Bacteria</taxon>
        <taxon>Pseudomonadati</taxon>
        <taxon>Pseudomonadota</taxon>
        <taxon>Gammaproteobacteria</taxon>
        <taxon>Enterobacterales</taxon>
        <taxon>Enterobacteriaceae</taxon>
        <taxon>Escherichia</taxon>
    </lineage>
</organism>
<feature type="chain" id="PRO_1000200871" description="23S rRNA (uracil(747)-C(5))-methyltransferase RlmC">
    <location>
        <begin position="1"/>
        <end position="375"/>
    </location>
</feature>
<feature type="active site" description="Nucleophile" evidence="1">
    <location>
        <position position="334"/>
    </location>
</feature>
<feature type="binding site" evidence="1">
    <location>
        <position position="3"/>
    </location>
    <ligand>
        <name>[4Fe-4S] cluster</name>
        <dbReference type="ChEBI" id="CHEBI:49883"/>
    </ligand>
</feature>
<feature type="binding site" evidence="1">
    <location>
        <position position="11"/>
    </location>
    <ligand>
        <name>[4Fe-4S] cluster</name>
        <dbReference type="ChEBI" id="CHEBI:49883"/>
    </ligand>
</feature>
<feature type="binding site" evidence="1">
    <location>
        <position position="14"/>
    </location>
    <ligand>
        <name>[4Fe-4S] cluster</name>
        <dbReference type="ChEBI" id="CHEBI:49883"/>
    </ligand>
</feature>
<feature type="binding site" evidence="1">
    <location>
        <position position="87"/>
    </location>
    <ligand>
        <name>[4Fe-4S] cluster</name>
        <dbReference type="ChEBI" id="CHEBI:49883"/>
    </ligand>
</feature>
<feature type="binding site" evidence="1">
    <location>
        <position position="212"/>
    </location>
    <ligand>
        <name>S-adenosyl-L-methionine</name>
        <dbReference type="ChEBI" id="CHEBI:59789"/>
    </ligand>
</feature>
<feature type="binding site" evidence="1">
    <location>
        <position position="241"/>
    </location>
    <ligand>
        <name>S-adenosyl-L-methionine</name>
        <dbReference type="ChEBI" id="CHEBI:59789"/>
    </ligand>
</feature>
<feature type="binding site" evidence="1">
    <location>
        <position position="262"/>
    </location>
    <ligand>
        <name>S-adenosyl-L-methionine</name>
        <dbReference type="ChEBI" id="CHEBI:59789"/>
    </ligand>
</feature>
<feature type="binding site" evidence="1">
    <location>
        <position position="307"/>
    </location>
    <ligand>
        <name>S-adenosyl-L-methionine</name>
        <dbReference type="ChEBI" id="CHEBI:59789"/>
    </ligand>
</feature>
<comment type="function">
    <text evidence="1">Catalyzes the formation of 5-methyl-uridine at position 747 (m5U747) in 23S rRNA.</text>
</comment>
<comment type="catalytic activity">
    <reaction evidence="1">
        <text>uridine(747) in 23S rRNA + S-adenosyl-L-methionine = 5-methyluridine(747) in 23S rRNA + S-adenosyl-L-homocysteine + H(+)</text>
        <dbReference type="Rhea" id="RHEA:42628"/>
        <dbReference type="Rhea" id="RHEA-COMP:10154"/>
        <dbReference type="Rhea" id="RHEA-COMP:10155"/>
        <dbReference type="ChEBI" id="CHEBI:15378"/>
        <dbReference type="ChEBI" id="CHEBI:57856"/>
        <dbReference type="ChEBI" id="CHEBI:59789"/>
        <dbReference type="ChEBI" id="CHEBI:65315"/>
        <dbReference type="ChEBI" id="CHEBI:74447"/>
        <dbReference type="EC" id="2.1.1.189"/>
    </reaction>
</comment>
<comment type="similarity">
    <text evidence="1">Belongs to the class I-like SAM-binding methyltransferase superfamily. RNA M5U methyltransferase family. RlmC subfamily.</text>
</comment>
<protein>
    <recommendedName>
        <fullName evidence="1">23S rRNA (uracil(747)-C(5))-methyltransferase RlmC</fullName>
        <ecNumber evidence="1">2.1.1.189</ecNumber>
    </recommendedName>
    <alternativeName>
        <fullName evidence="1">23S rRNA(m5U747)-methyltransferase</fullName>
    </alternativeName>
</protein>
<evidence type="ECO:0000255" key="1">
    <source>
        <dbReference type="HAMAP-Rule" id="MF_01012"/>
    </source>
</evidence>
<sequence length="375" mass="42105">MQCALYDAGRCRSCQWITQLIPEQLSAKTADLKNLLADFSVEEWCESVSGPEQGFRNKAKMVVSGSVEKPLLGMLHRDGTPEDLCDCPLYPSSFAPVFAALKPFIARAGLTPYNVARKRGELKYILLTESQSDGGMMLRFVLRSETKLAQLRKALPWLQEQLPQLKVITANIQPIHMAIMEGETEIYLTEQQALAERFNDVPLWIRPQSFFQTNPVVASQLYATARDWVRQLPVKHMWDLFCGVGGFGLHCATPDMQLTGIEIAPEAIACAKQSAAELGLTRLQFQALDSTQFATTQGEVPELVLVNPPRRGIGKPLCDYLSTMAPRFIIYSSCNAQTMTKDIRELSGYRIERVQLFDMFPHTAHYEVLTLLVKQ</sequence>
<keyword id="KW-0004">4Fe-4S</keyword>
<keyword id="KW-0408">Iron</keyword>
<keyword id="KW-0411">Iron-sulfur</keyword>
<keyword id="KW-0479">Metal-binding</keyword>
<keyword id="KW-0489">Methyltransferase</keyword>
<keyword id="KW-0698">rRNA processing</keyword>
<keyword id="KW-0949">S-adenosyl-L-methionine</keyword>
<keyword id="KW-0808">Transferase</keyword>
<accession>B7LN23</accession>
<proteinExistence type="inferred from homology"/>
<gene>
    <name evidence="1" type="primary">rlmC</name>
    <name type="synonym">rumB</name>
    <name type="ordered locus">EFER_1002</name>
</gene>
<reference key="1">
    <citation type="journal article" date="2009" name="PLoS Genet.">
        <title>Organised genome dynamics in the Escherichia coli species results in highly diverse adaptive paths.</title>
        <authorList>
            <person name="Touchon M."/>
            <person name="Hoede C."/>
            <person name="Tenaillon O."/>
            <person name="Barbe V."/>
            <person name="Baeriswyl S."/>
            <person name="Bidet P."/>
            <person name="Bingen E."/>
            <person name="Bonacorsi S."/>
            <person name="Bouchier C."/>
            <person name="Bouvet O."/>
            <person name="Calteau A."/>
            <person name="Chiapello H."/>
            <person name="Clermont O."/>
            <person name="Cruveiller S."/>
            <person name="Danchin A."/>
            <person name="Diard M."/>
            <person name="Dossat C."/>
            <person name="Karoui M.E."/>
            <person name="Frapy E."/>
            <person name="Garry L."/>
            <person name="Ghigo J.M."/>
            <person name="Gilles A.M."/>
            <person name="Johnson J."/>
            <person name="Le Bouguenec C."/>
            <person name="Lescat M."/>
            <person name="Mangenot S."/>
            <person name="Martinez-Jehanne V."/>
            <person name="Matic I."/>
            <person name="Nassif X."/>
            <person name="Oztas S."/>
            <person name="Petit M.A."/>
            <person name="Pichon C."/>
            <person name="Rouy Z."/>
            <person name="Ruf C.S."/>
            <person name="Schneider D."/>
            <person name="Tourret J."/>
            <person name="Vacherie B."/>
            <person name="Vallenet D."/>
            <person name="Medigue C."/>
            <person name="Rocha E.P.C."/>
            <person name="Denamur E."/>
        </authorList>
    </citation>
    <scope>NUCLEOTIDE SEQUENCE [LARGE SCALE GENOMIC DNA]</scope>
    <source>
        <strain>ATCC 35469 / DSM 13698 / BCRC 15582 / CCUG 18766 / IAM 14443 / JCM 21226 / LMG 7866 / NBRC 102419 / NCTC 12128 / CDC 0568-73</strain>
    </source>
</reference>
<dbReference type="EC" id="2.1.1.189" evidence="1"/>
<dbReference type="EMBL" id="CU928158">
    <property type="protein sequence ID" value="CAQ88534.1"/>
    <property type="molecule type" value="Genomic_DNA"/>
</dbReference>
<dbReference type="RefSeq" id="WP_001149692.1">
    <property type="nucleotide sequence ID" value="NC_011740.1"/>
</dbReference>
<dbReference type="SMR" id="B7LN23"/>
<dbReference type="GeneID" id="75057944"/>
<dbReference type="KEGG" id="efe:EFER_1002"/>
<dbReference type="HOGENOM" id="CLU_014689_0_0_6"/>
<dbReference type="OrthoDB" id="9804590at2"/>
<dbReference type="Proteomes" id="UP000000745">
    <property type="component" value="Chromosome"/>
</dbReference>
<dbReference type="GO" id="GO:0051539">
    <property type="term" value="F:4 iron, 4 sulfur cluster binding"/>
    <property type="evidence" value="ECO:0007669"/>
    <property type="project" value="UniProtKB-KW"/>
</dbReference>
<dbReference type="GO" id="GO:0005506">
    <property type="term" value="F:iron ion binding"/>
    <property type="evidence" value="ECO:0007669"/>
    <property type="project" value="UniProtKB-UniRule"/>
</dbReference>
<dbReference type="GO" id="GO:0070041">
    <property type="term" value="F:rRNA (uridine-C5-)-methyltransferase activity"/>
    <property type="evidence" value="ECO:0007669"/>
    <property type="project" value="UniProtKB-UniRule"/>
</dbReference>
<dbReference type="GO" id="GO:0070475">
    <property type="term" value="P:rRNA base methylation"/>
    <property type="evidence" value="ECO:0007669"/>
    <property type="project" value="TreeGrafter"/>
</dbReference>
<dbReference type="CDD" id="cd02440">
    <property type="entry name" value="AdoMet_MTases"/>
    <property type="match status" value="1"/>
</dbReference>
<dbReference type="FunFam" id="2.40.50.1070:FF:000002">
    <property type="entry name" value="23S rRNA (uracil(747)-C(5))-methyltransferase RlmC"/>
    <property type="match status" value="1"/>
</dbReference>
<dbReference type="FunFam" id="3.40.50.150:FF:000049">
    <property type="entry name" value="23S rRNA (uracil(747)-C(5))-methyltransferase RlmC"/>
    <property type="match status" value="1"/>
</dbReference>
<dbReference type="Gene3D" id="2.40.50.1070">
    <property type="match status" value="1"/>
</dbReference>
<dbReference type="Gene3D" id="3.40.50.150">
    <property type="entry name" value="Vaccinia Virus protein VP39"/>
    <property type="match status" value="1"/>
</dbReference>
<dbReference type="HAMAP" id="MF_01012">
    <property type="entry name" value="23SrRNA_methyltr_RlmC"/>
    <property type="match status" value="1"/>
</dbReference>
<dbReference type="InterPro" id="IPR011825">
    <property type="entry name" value="23SrRNA_MeTrfase_RlmC"/>
</dbReference>
<dbReference type="InterPro" id="IPR030390">
    <property type="entry name" value="MeTrfase_TrmA_AS"/>
</dbReference>
<dbReference type="InterPro" id="IPR030391">
    <property type="entry name" value="MeTrfase_TrmA_CS"/>
</dbReference>
<dbReference type="InterPro" id="IPR029063">
    <property type="entry name" value="SAM-dependent_MTases_sf"/>
</dbReference>
<dbReference type="InterPro" id="IPR010280">
    <property type="entry name" value="U5_MeTrfase_fam"/>
</dbReference>
<dbReference type="NCBIfam" id="TIGR02085">
    <property type="entry name" value="meth_trns_rumB"/>
    <property type="match status" value="1"/>
</dbReference>
<dbReference type="PANTHER" id="PTHR11061">
    <property type="entry name" value="RNA M5U METHYLTRANSFERASE"/>
    <property type="match status" value="1"/>
</dbReference>
<dbReference type="PANTHER" id="PTHR11061:SF30">
    <property type="entry name" value="TRNA (URACIL(54)-C(5))-METHYLTRANSFERASE"/>
    <property type="match status" value="1"/>
</dbReference>
<dbReference type="Pfam" id="PF05958">
    <property type="entry name" value="tRNA_U5-meth_tr"/>
    <property type="match status" value="1"/>
</dbReference>
<dbReference type="SUPFAM" id="SSF53335">
    <property type="entry name" value="S-adenosyl-L-methionine-dependent methyltransferases"/>
    <property type="match status" value="1"/>
</dbReference>
<dbReference type="PROSITE" id="PS51687">
    <property type="entry name" value="SAM_MT_RNA_M5U"/>
    <property type="match status" value="1"/>
</dbReference>
<dbReference type="PROSITE" id="PS01230">
    <property type="entry name" value="TRMA_1"/>
    <property type="match status" value="1"/>
</dbReference>
<dbReference type="PROSITE" id="PS01231">
    <property type="entry name" value="TRMA_2"/>
    <property type="match status" value="1"/>
</dbReference>